<feature type="chain" id="PRO_1000143551" description="ATP synthase subunit beta">
    <location>
        <begin position="1"/>
        <end position="468"/>
    </location>
</feature>
<feature type="binding site" evidence="1">
    <location>
        <begin position="148"/>
        <end position="155"/>
    </location>
    <ligand>
        <name>ATP</name>
        <dbReference type="ChEBI" id="CHEBI:30616"/>
    </ligand>
</feature>
<keyword id="KW-0066">ATP synthesis</keyword>
<keyword id="KW-0067">ATP-binding</keyword>
<keyword id="KW-1003">Cell membrane</keyword>
<keyword id="KW-0139">CF(1)</keyword>
<keyword id="KW-0375">Hydrogen ion transport</keyword>
<keyword id="KW-0406">Ion transport</keyword>
<keyword id="KW-0472">Membrane</keyword>
<keyword id="KW-0547">Nucleotide-binding</keyword>
<keyword id="KW-1185">Reference proteome</keyword>
<keyword id="KW-1278">Translocase</keyword>
<keyword id="KW-0813">Transport</keyword>
<protein>
    <recommendedName>
        <fullName evidence="1">ATP synthase subunit beta</fullName>
        <ecNumber evidence="1">7.1.2.2</ecNumber>
    </recommendedName>
    <alternativeName>
        <fullName evidence="1">ATP synthase F1 sector subunit beta</fullName>
    </alternativeName>
    <alternativeName>
        <fullName evidence="1">F-ATPase subunit beta</fullName>
    </alternativeName>
</protein>
<sequence>MSQGKIVQIIGAVVDVEFPRESVPKVYDALKVENTEITLEVQQQLGDGVVRTIALGSTDGLKRNLVAVNTGRGISVPVGAGTLGRIMDVLGRPIDEAGPVAASDSWEIHRAAPSYEDQSPATELLETGIKVIDLMCPFAKGGKVGLFGGAGVGKTVNMMELINNIAKAHSGLSVFAGVGERTREGNDFYHEMKDSNVLDKVAMVYGQMNEPPGNRLRVALTGLTMAEYFRDEKDENGKGKDVLLFVDNIYRYTLAGTEVSALLGRMPSAVGYQPTLAEEMGVLQERITSTKNGSITSIQAVYVPADDLTDPSPATTFAHLDSTVTLSRSIASLGIYPAVDPLDSTSRQMDPLVIGHEHYDTAQRVQQTLQKYKELKDIIAILGMDELSEEDKQAVSRARKIERFFSQPFHVAEVFTGSPGKYVPLKDTIRGFKAIVDGEYDHLPEQAFYMVGGIEEAVEKAKKMAEKA</sequence>
<comment type="function">
    <text evidence="1">Produces ATP from ADP in the presence of a proton gradient across the membrane. The catalytic sites are hosted primarily by the beta subunits.</text>
</comment>
<comment type="catalytic activity">
    <reaction evidence="1">
        <text>ATP + H2O + 4 H(+)(in) = ADP + phosphate + 5 H(+)(out)</text>
        <dbReference type="Rhea" id="RHEA:57720"/>
        <dbReference type="ChEBI" id="CHEBI:15377"/>
        <dbReference type="ChEBI" id="CHEBI:15378"/>
        <dbReference type="ChEBI" id="CHEBI:30616"/>
        <dbReference type="ChEBI" id="CHEBI:43474"/>
        <dbReference type="ChEBI" id="CHEBI:456216"/>
        <dbReference type="EC" id="7.1.2.2"/>
    </reaction>
</comment>
<comment type="subunit">
    <text evidence="1">F-type ATPases have 2 components, CF(1) - the catalytic core - and CF(0) - the membrane proton channel. CF(1) has five subunits: alpha(3), beta(3), gamma(1), delta(1), epsilon(1). CF(0) has three main subunits: a(1), b(2) and c(9-12). The alpha and beta chains form an alternating ring which encloses part of the gamma chain. CF(1) is attached to CF(0) by a central stalk formed by the gamma and epsilon chains, while a peripheral stalk is formed by the delta and b chains.</text>
</comment>
<comment type="subcellular location">
    <subcellularLocation>
        <location evidence="1">Cell membrane</location>
        <topology evidence="1">Peripheral membrane protein</topology>
    </subcellularLocation>
</comment>
<comment type="similarity">
    <text evidence="1">Belongs to the ATPase alpha/beta chains family.</text>
</comment>
<organism>
    <name type="scientific">Stenotrophomonas maltophilia (strain K279a)</name>
    <dbReference type="NCBI Taxonomy" id="522373"/>
    <lineage>
        <taxon>Bacteria</taxon>
        <taxon>Pseudomonadati</taxon>
        <taxon>Pseudomonadota</taxon>
        <taxon>Gammaproteobacteria</taxon>
        <taxon>Lysobacterales</taxon>
        <taxon>Lysobacteraceae</taxon>
        <taxon>Stenotrophomonas</taxon>
        <taxon>Stenotrophomonas maltophilia group</taxon>
    </lineage>
</organism>
<proteinExistence type="inferred from homology"/>
<dbReference type="EC" id="7.1.2.2" evidence="1"/>
<dbReference type="EMBL" id="AM743169">
    <property type="protein sequence ID" value="CAQ47502.1"/>
    <property type="molecule type" value="Genomic_DNA"/>
</dbReference>
<dbReference type="RefSeq" id="WP_005411128.1">
    <property type="nucleotide sequence ID" value="NC_010943.1"/>
</dbReference>
<dbReference type="SMR" id="B2FHY8"/>
<dbReference type="EnsemblBacteria" id="CAQ47502">
    <property type="protein sequence ID" value="CAQ47502"/>
    <property type="gene ID" value="Smlt4111"/>
</dbReference>
<dbReference type="GeneID" id="93835077"/>
<dbReference type="KEGG" id="sml:Smlt4111"/>
<dbReference type="eggNOG" id="COG0055">
    <property type="taxonomic scope" value="Bacteria"/>
</dbReference>
<dbReference type="HOGENOM" id="CLU_022398_0_2_6"/>
<dbReference type="Proteomes" id="UP000008840">
    <property type="component" value="Chromosome"/>
</dbReference>
<dbReference type="GO" id="GO:0005886">
    <property type="term" value="C:plasma membrane"/>
    <property type="evidence" value="ECO:0007669"/>
    <property type="project" value="UniProtKB-SubCell"/>
</dbReference>
<dbReference type="GO" id="GO:0045259">
    <property type="term" value="C:proton-transporting ATP synthase complex"/>
    <property type="evidence" value="ECO:0007669"/>
    <property type="project" value="UniProtKB-KW"/>
</dbReference>
<dbReference type="GO" id="GO:0005524">
    <property type="term" value="F:ATP binding"/>
    <property type="evidence" value="ECO:0007669"/>
    <property type="project" value="UniProtKB-UniRule"/>
</dbReference>
<dbReference type="GO" id="GO:0016887">
    <property type="term" value="F:ATP hydrolysis activity"/>
    <property type="evidence" value="ECO:0007669"/>
    <property type="project" value="InterPro"/>
</dbReference>
<dbReference type="GO" id="GO:0046933">
    <property type="term" value="F:proton-transporting ATP synthase activity, rotational mechanism"/>
    <property type="evidence" value="ECO:0007669"/>
    <property type="project" value="UniProtKB-UniRule"/>
</dbReference>
<dbReference type="CDD" id="cd18110">
    <property type="entry name" value="ATP-synt_F1_beta_C"/>
    <property type="match status" value="1"/>
</dbReference>
<dbReference type="CDD" id="cd18115">
    <property type="entry name" value="ATP-synt_F1_beta_N"/>
    <property type="match status" value="1"/>
</dbReference>
<dbReference type="CDD" id="cd01133">
    <property type="entry name" value="F1-ATPase_beta_CD"/>
    <property type="match status" value="1"/>
</dbReference>
<dbReference type="FunFam" id="1.10.1140.10:FF:000001">
    <property type="entry name" value="ATP synthase subunit beta"/>
    <property type="match status" value="1"/>
</dbReference>
<dbReference type="FunFam" id="3.40.50.300:FF:000004">
    <property type="entry name" value="ATP synthase subunit beta"/>
    <property type="match status" value="1"/>
</dbReference>
<dbReference type="Gene3D" id="2.40.10.170">
    <property type="match status" value="1"/>
</dbReference>
<dbReference type="Gene3D" id="1.10.1140.10">
    <property type="entry name" value="Bovine Mitochondrial F1-atpase, Atp Synthase Beta Chain, Chain D, domain 3"/>
    <property type="match status" value="1"/>
</dbReference>
<dbReference type="Gene3D" id="3.40.50.300">
    <property type="entry name" value="P-loop containing nucleotide triphosphate hydrolases"/>
    <property type="match status" value="1"/>
</dbReference>
<dbReference type="HAMAP" id="MF_01347">
    <property type="entry name" value="ATP_synth_beta_bact"/>
    <property type="match status" value="1"/>
</dbReference>
<dbReference type="InterPro" id="IPR003593">
    <property type="entry name" value="AAA+_ATPase"/>
</dbReference>
<dbReference type="InterPro" id="IPR055190">
    <property type="entry name" value="ATP-synt_VA_C"/>
</dbReference>
<dbReference type="InterPro" id="IPR005722">
    <property type="entry name" value="ATP_synth_F1_bsu"/>
</dbReference>
<dbReference type="InterPro" id="IPR020003">
    <property type="entry name" value="ATPase_a/bsu_AS"/>
</dbReference>
<dbReference type="InterPro" id="IPR050053">
    <property type="entry name" value="ATPase_alpha/beta_chains"/>
</dbReference>
<dbReference type="InterPro" id="IPR004100">
    <property type="entry name" value="ATPase_F1/V1/A1_a/bsu_N"/>
</dbReference>
<dbReference type="InterPro" id="IPR036121">
    <property type="entry name" value="ATPase_F1/V1/A1_a/bsu_N_sf"/>
</dbReference>
<dbReference type="InterPro" id="IPR000194">
    <property type="entry name" value="ATPase_F1/V1/A1_a/bsu_nucl-bd"/>
</dbReference>
<dbReference type="InterPro" id="IPR024034">
    <property type="entry name" value="ATPase_F1/V1_b/a_C"/>
</dbReference>
<dbReference type="InterPro" id="IPR027417">
    <property type="entry name" value="P-loop_NTPase"/>
</dbReference>
<dbReference type="NCBIfam" id="TIGR01039">
    <property type="entry name" value="atpD"/>
    <property type="match status" value="1"/>
</dbReference>
<dbReference type="PANTHER" id="PTHR15184">
    <property type="entry name" value="ATP SYNTHASE"/>
    <property type="match status" value="1"/>
</dbReference>
<dbReference type="PANTHER" id="PTHR15184:SF71">
    <property type="entry name" value="ATP SYNTHASE SUBUNIT BETA, MITOCHONDRIAL"/>
    <property type="match status" value="1"/>
</dbReference>
<dbReference type="Pfam" id="PF00006">
    <property type="entry name" value="ATP-synt_ab"/>
    <property type="match status" value="1"/>
</dbReference>
<dbReference type="Pfam" id="PF02874">
    <property type="entry name" value="ATP-synt_ab_N"/>
    <property type="match status" value="1"/>
</dbReference>
<dbReference type="Pfam" id="PF22919">
    <property type="entry name" value="ATP-synt_VA_C"/>
    <property type="match status" value="1"/>
</dbReference>
<dbReference type="SMART" id="SM00382">
    <property type="entry name" value="AAA"/>
    <property type="match status" value="1"/>
</dbReference>
<dbReference type="SUPFAM" id="SSF47917">
    <property type="entry name" value="C-terminal domain of alpha and beta subunits of F1 ATP synthase"/>
    <property type="match status" value="1"/>
</dbReference>
<dbReference type="SUPFAM" id="SSF50615">
    <property type="entry name" value="N-terminal domain of alpha and beta subunits of F1 ATP synthase"/>
    <property type="match status" value="1"/>
</dbReference>
<dbReference type="SUPFAM" id="SSF52540">
    <property type="entry name" value="P-loop containing nucleoside triphosphate hydrolases"/>
    <property type="match status" value="1"/>
</dbReference>
<dbReference type="PROSITE" id="PS00152">
    <property type="entry name" value="ATPASE_ALPHA_BETA"/>
    <property type="match status" value="1"/>
</dbReference>
<accession>B2FHY8</accession>
<reference key="1">
    <citation type="journal article" date="2008" name="Genome Biol.">
        <title>The complete genome, comparative and functional analysis of Stenotrophomonas maltophilia reveals an organism heavily shielded by drug resistance determinants.</title>
        <authorList>
            <person name="Crossman L.C."/>
            <person name="Gould V.C."/>
            <person name="Dow J.M."/>
            <person name="Vernikos G.S."/>
            <person name="Okazaki A."/>
            <person name="Sebaihia M."/>
            <person name="Saunders D."/>
            <person name="Arrowsmith C."/>
            <person name="Carver T."/>
            <person name="Peters N."/>
            <person name="Adlem E."/>
            <person name="Kerhornou A."/>
            <person name="Lord A."/>
            <person name="Murphy L."/>
            <person name="Seeger K."/>
            <person name="Squares R."/>
            <person name="Rutter S."/>
            <person name="Quail M.A."/>
            <person name="Rajandream M.A."/>
            <person name="Harris D."/>
            <person name="Churcher C."/>
            <person name="Bentley S.D."/>
            <person name="Parkhill J."/>
            <person name="Thomson N.R."/>
            <person name="Avison M.B."/>
        </authorList>
    </citation>
    <scope>NUCLEOTIDE SEQUENCE [LARGE SCALE GENOMIC DNA]</scope>
    <source>
        <strain>K279a</strain>
    </source>
</reference>
<name>ATPB_STRMK</name>
<gene>
    <name evidence="1" type="primary">atpD</name>
    <name type="ordered locus">Smlt4111</name>
</gene>
<evidence type="ECO:0000255" key="1">
    <source>
        <dbReference type="HAMAP-Rule" id="MF_01347"/>
    </source>
</evidence>